<comment type="function">
    <text evidence="1 2">Immunity protein component of a toxin-immunity protein module, which functions as a cellular contact-dependent growth inhibition (CDI) system. Neutralizes the tRNase activity of cognate toxin WapA upon expression in E.coli. Does not inhibit WapA from other strains of B.subtilis. The WapA C-terminus cannot be expressed on its own in E.coli, however it can be cloned in the presence of its cognate immunity protein gene. Cell contact is necessary for growth inhibition (PubMed:23572593). Unlike the LXG toxin-immunity modules, WapAI mediates competition under shaking culture conditions (PubMed:34280190).</text>
</comment>
<comment type="induction">
    <text evidence="2">Constitutively and highly expressed on solid and in liquid medium, with or without biofilm formation by 12 hours of culture. Repressed by DegU.</text>
</comment>
<comment type="disruption phenotype">
    <text evidence="1 2">A double wapA-wapI deletion strain is growth inhibited when cocultured with wild-type cells. When wapI is reintroduced it restores growth in a cognate toxin-dependent fashion (PubMed:23572593). Growth inhibition by wild-type cells is strongest on LB medium and less effective on media that promote biofilm formation (MSgg and 2xSGG) (PubMed:34280190).</text>
</comment>
<name>WAPI_BACSU</name>
<feature type="chain" id="PRO_0000050045" description="Immunity protein WapI">
    <location>
        <begin position="1"/>
        <end position="142"/>
    </location>
</feature>
<dbReference type="EMBL" id="L05634">
    <property type="protein sequence ID" value="AAA22884.1"/>
    <property type="molecule type" value="Genomic_DNA"/>
</dbReference>
<dbReference type="EMBL" id="D31856">
    <property type="protein sequence ID" value="BAA06657.1"/>
    <property type="molecule type" value="Genomic_DNA"/>
</dbReference>
<dbReference type="EMBL" id="D29985">
    <property type="protein sequence ID" value="BAA06261.1"/>
    <property type="molecule type" value="Genomic_DNA"/>
</dbReference>
<dbReference type="EMBL" id="D83026">
    <property type="protein sequence ID" value="BAA11684.1"/>
    <property type="molecule type" value="Genomic_DNA"/>
</dbReference>
<dbReference type="EMBL" id="AL009126">
    <property type="protein sequence ID" value="CAB15958.1"/>
    <property type="molecule type" value="Genomic_DNA"/>
</dbReference>
<dbReference type="PIR" id="S32921">
    <property type="entry name" value="S32921"/>
</dbReference>
<dbReference type="RefSeq" id="NP_391801.1">
    <property type="nucleotide sequence ID" value="NC_000964.3"/>
</dbReference>
<dbReference type="RefSeq" id="WP_003227169.1">
    <property type="nucleotide sequence ID" value="NZ_OZ025638.1"/>
</dbReference>
<dbReference type="FunCoup" id="Q07836">
    <property type="interactions" value="15"/>
</dbReference>
<dbReference type="IntAct" id="Q07836">
    <property type="interactions" value="1"/>
</dbReference>
<dbReference type="MINT" id="Q07836"/>
<dbReference type="STRING" id="224308.BSU39220"/>
<dbReference type="jPOST" id="Q07836"/>
<dbReference type="PaxDb" id="224308-BSU39220"/>
<dbReference type="EnsemblBacteria" id="CAB15958">
    <property type="protein sequence ID" value="CAB15958"/>
    <property type="gene ID" value="BSU_39220"/>
</dbReference>
<dbReference type="GeneID" id="937508"/>
<dbReference type="KEGG" id="bsu:BSU39220"/>
<dbReference type="PATRIC" id="fig|224308.179.peg.4246"/>
<dbReference type="eggNOG" id="ENOG502ZT8F">
    <property type="taxonomic scope" value="Bacteria"/>
</dbReference>
<dbReference type="InParanoid" id="Q07836"/>
<dbReference type="OrthoDB" id="2907406at2"/>
<dbReference type="BioCyc" id="BSUB:BSU39220-MONOMER"/>
<dbReference type="Proteomes" id="UP000001570">
    <property type="component" value="Chromosome"/>
</dbReference>
<dbReference type="InterPro" id="IPR056510">
    <property type="entry name" value="WapI"/>
</dbReference>
<dbReference type="Pfam" id="PF24716">
    <property type="entry name" value="WapI"/>
    <property type="match status" value="1"/>
</dbReference>
<protein>
    <recommendedName>
        <fullName>Immunity protein WapI</fullName>
    </recommendedName>
</protein>
<reference key="1">
    <citation type="journal article" date="1993" name="Mol. Microbiol.">
        <title>Molecular analysis of three major wall-associated proteins of Bacillus subtilis 168: evidence for processing of the product of a gene encoding a 258 kDa precursor two-domain ligand-binding protein.</title>
        <authorList>
            <person name="Foster S.J."/>
        </authorList>
    </citation>
    <scope>NUCLEOTIDE SEQUENCE [GENOMIC DNA]</scope>
    <source>
        <strain>168</strain>
    </source>
</reference>
<reference key="2">
    <citation type="journal article" date="1995" name="Microbiology">
        <title>Cloning and sequencing of a 29 kb region of the Bacillus subtilis genome containing the hut and wapA loci.</title>
        <authorList>
            <person name="Yoshida K."/>
            <person name="Sano H."/>
            <person name="Seki S."/>
            <person name="Oda M."/>
            <person name="Fujimura M."/>
            <person name="Fujita Y."/>
        </authorList>
    </citation>
    <scope>NUCLEOTIDE SEQUENCE [GENOMIC DNA]</scope>
    <source>
        <strain>168 / BGSC1A1</strain>
    </source>
</reference>
<reference key="3">
    <citation type="journal article" date="1996" name="Microbiology">
        <title>Sequencing of a 65 kb region of the Bacillus subtilis genome containing the lic and cel loci, and creation of a 177 kb contig covering the gnt-sacXY region.</title>
        <authorList>
            <person name="Yoshida K."/>
            <person name="Shindo K."/>
            <person name="Sano H."/>
            <person name="Seki S."/>
            <person name="Fujimura M."/>
            <person name="Yanai N."/>
            <person name="Miwa Y."/>
            <person name="Fujita Y."/>
        </authorList>
    </citation>
    <scope>NUCLEOTIDE SEQUENCE [GENOMIC DNA]</scope>
    <source>
        <strain>168 / BGSC1A1</strain>
    </source>
</reference>
<reference key="4">
    <citation type="journal article" date="1997" name="Nature">
        <title>The complete genome sequence of the Gram-positive bacterium Bacillus subtilis.</title>
        <authorList>
            <person name="Kunst F."/>
            <person name="Ogasawara N."/>
            <person name="Moszer I."/>
            <person name="Albertini A.M."/>
            <person name="Alloni G."/>
            <person name="Azevedo V."/>
            <person name="Bertero M.G."/>
            <person name="Bessieres P."/>
            <person name="Bolotin A."/>
            <person name="Borchert S."/>
            <person name="Borriss R."/>
            <person name="Boursier L."/>
            <person name="Brans A."/>
            <person name="Braun M."/>
            <person name="Brignell S.C."/>
            <person name="Bron S."/>
            <person name="Brouillet S."/>
            <person name="Bruschi C.V."/>
            <person name="Caldwell B."/>
            <person name="Capuano V."/>
            <person name="Carter N.M."/>
            <person name="Choi S.-K."/>
            <person name="Codani J.-J."/>
            <person name="Connerton I.F."/>
            <person name="Cummings N.J."/>
            <person name="Daniel R.A."/>
            <person name="Denizot F."/>
            <person name="Devine K.M."/>
            <person name="Duesterhoeft A."/>
            <person name="Ehrlich S.D."/>
            <person name="Emmerson P.T."/>
            <person name="Entian K.-D."/>
            <person name="Errington J."/>
            <person name="Fabret C."/>
            <person name="Ferrari E."/>
            <person name="Foulger D."/>
            <person name="Fritz C."/>
            <person name="Fujita M."/>
            <person name="Fujita Y."/>
            <person name="Fuma S."/>
            <person name="Galizzi A."/>
            <person name="Galleron N."/>
            <person name="Ghim S.-Y."/>
            <person name="Glaser P."/>
            <person name="Goffeau A."/>
            <person name="Golightly E.J."/>
            <person name="Grandi G."/>
            <person name="Guiseppi G."/>
            <person name="Guy B.J."/>
            <person name="Haga K."/>
            <person name="Haiech J."/>
            <person name="Harwood C.R."/>
            <person name="Henaut A."/>
            <person name="Hilbert H."/>
            <person name="Holsappel S."/>
            <person name="Hosono S."/>
            <person name="Hullo M.-F."/>
            <person name="Itaya M."/>
            <person name="Jones L.-M."/>
            <person name="Joris B."/>
            <person name="Karamata D."/>
            <person name="Kasahara Y."/>
            <person name="Klaerr-Blanchard M."/>
            <person name="Klein C."/>
            <person name="Kobayashi Y."/>
            <person name="Koetter P."/>
            <person name="Koningstein G."/>
            <person name="Krogh S."/>
            <person name="Kumano M."/>
            <person name="Kurita K."/>
            <person name="Lapidus A."/>
            <person name="Lardinois S."/>
            <person name="Lauber J."/>
            <person name="Lazarevic V."/>
            <person name="Lee S.-M."/>
            <person name="Levine A."/>
            <person name="Liu H."/>
            <person name="Masuda S."/>
            <person name="Mauel C."/>
            <person name="Medigue C."/>
            <person name="Medina N."/>
            <person name="Mellado R.P."/>
            <person name="Mizuno M."/>
            <person name="Moestl D."/>
            <person name="Nakai S."/>
            <person name="Noback M."/>
            <person name="Noone D."/>
            <person name="O'Reilly M."/>
            <person name="Ogawa K."/>
            <person name="Ogiwara A."/>
            <person name="Oudega B."/>
            <person name="Park S.-H."/>
            <person name="Parro V."/>
            <person name="Pohl T.M."/>
            <person name="Portetelle D."/>
            <person name="Porwollik S."/>
            <person name="Prescott A.M."/>
            <person name="Presecan E."/>
            <person name="Pujic P."/>
            <person name="Purnelle B."/>
            <person name="Rapoport G."/>
            <person name="Rey M."/>
            <person name="Reynolds S."/>
            <person name="Rieger M."/>
            <person name="Rivolta C."/>
            <person name="Rocha E."/>
            <person name="Roche B."/>
            <person name="Rose M."/>
            <person name="Sadaie Y."/>
            <person name="Sato T."/>
            <person name="Scanlan E."/>
            <person name="Schleich S."/>
            <person name="Schroeter R."/>
            <person name="Scoffone F."/>
            <person name="Sekiguchi J."/>
            <person name="Sekowska A."/>
            <person name="Seror S.J."/>
            <person name="Serror P."/>
            <person name="Shin B.-S."/>
            <person name="Soldo B."/>
            <person name="Sorokin A."/>
            <person name="Tacconi E."/>
            <person name="Takagi T."/>
            <person name="Takahashi H."/>
            <person name="Takemaru K."/>
            <person name="Takeuchi M."/>
            <person name="Tamakoshi A."/>
            <person name="Tanaka T."/>
            <person name="Terpstra P."/>
            <person name="Tognoni A."/>
            <person name="Tosato V."/>
            <person name="Uchiyama S."/>
            <person name="Vandenbol M."/>
            <person name="Vannier F."/>
            <person name="Vassarotti A."/>
            <person name="Viari A."/>
            <person name="Wambutt R."/>
            <person name="Wedler E."/>
            <person name="Wedler H."/>
            <person name="Weitzenegger T."/>
            <person name="Winters P."/>
            <person name="Wipat A."/>
            <person name="Yamamoto H."/>
            <person name="Yamane K."/>
            <person name="Yasumoto K."/>
            <person name="Yata K."/>
            <person name="Yoshida K."/>
            <person name="Yoshikawa H.-F."/>
            <person name="Zumstein E."/>
            <person name="Yoshikawa H."/>
            <person name="Danchin A."/>
        </authorList>
    </citation>
    <scope>NUCLEOTIDE SEQUENCE [LARGE SCALE GENOMIC DNA]</scope>
    <source>
        <strain>168</strain>
    </source>
</reference>
<reference key="5">
    <citation type="journal article" date="2013" name="Proc. Natl. Acad. Sci. U.S.A.">
        <title>Rhs proteins from diverse bacteria mediate intercellular competition.</title>
        <authorList>
            <person name="Koskiniemi S."/>
            <person name="Lamoureux J.G."/>
            <person name="Nikolakakis K.C."/>
            <person name="t'Kint de Roodenbeke C."/>
            <person name="Kaplan M.D."/>
            <person name="Low D.A."/>
            <person name="Hayes C.S."/>
        </authorList>
    </citation>
    <scope>FUNCTION AS AN IMMUNITY PROTEIN</scope>
    <scope>EXPRESSION IN E.COLI</scope>
    <scope>DISRUPTION PHENOTYPE</scope>
    <source>
        <strain>168</strain>
    </source>
</reference>
<reference key="6">
    <citation type="journal article" date="2021" name="PLoS Genet.">
        <title>Diverse LXG toxin and antitoxin systems specifically mediate intraspecies competition in Bacillus subtilis biofilms.</title>
        <authorList>
            <person name="Kobayashi K."/>
        </authorList>
    </citation>
    <scope>FUNCTION</scope>
    <scope>INDUCTION</scope>
    <scope>DISRUPTION PHENOTYPE</scope>
    <source>
        <strain>168 / Marburg / ATCC 6051 / DSM 10 / JCM 1465 / NBRC 13719 / NCIMB 3610 / NRRL NRS-744 / VKM B-501</strain>
    </source>
</reference>
<gene>
    <name type="primary">wapI</name>
    <name type="synonym">yxxG</name>
    <name type="ordered locus">BSU39220</name>
    <name type="ORF">N17H</name>
</gene>
<keyword id="KW-1185">Reference proteome</keyword>
<organism>
    <name type="scientific">Bacillus subtilis (strain 168)</name>
    <dbReference type="NCBI Taxonomy" id="224308"/>
    <lineage>
        <taxon>Bacteria</taxon>
        <taxon>Bacillati</taxon>
        <taxon>Bacillota</taxon>
        <taxon>Bacilli</taxon>
        <taxon>Bacillales</taxon>
        <taxon>Bacillaceae</taxon>
        <taxon>Bacillus</taxon>
    </lineage>
</organism>
<evidence type="ECO:0000269" key="1">
    <source>
    </source>
</evidence>
<evidence type="ECO:0000269" key="2">
    <source>
    </source>
</evidence>
<proteinExistence type="evidence at protein level"/>
<accession>Q07836</accession>
<sequence>MAKIKDDCIELELTPRRYQELDDDPFILSVFELLENKKAVVRDFSAVLLESEYKVLISGIETMIKGNQDSISLETIEPFLFLSIDQENGNYRIKIKIIFDDYKESKSNSNLFEINCNEEKLESFVTALKLNLENTKNPSKLP</sequence>